<gene>
    <name evidence="1" type="primary">deoA</name>
    <name type="ordered locus">Ssed_3377</name>
</gene>
<protein>
    <recommendedName>
        <fullName evidence="1">Thymidine phosphorylase</fullName>
        <ecNumber evidence="1">2.4.2.4</ecNumber>
    </recommendedName>
    <alternativeName>
        <fullName evidence="1">TdRPase</fullName>
    </alternativeName>
</protein>
<reference key="1">
    <citation type="submission" date="2007-08" db="EMBL/GenBank/DDBJ databases">
        <title>Complete sequence of Shewanella sediminis HAW-EB3.</title>
        <authorList>
            <consortium name="US DOE Joint Genome Institute"/>
            <person name="Copeland A."/>
            <person name="Lucas S."/>
            <person name="Lapidus A."/>
            <person name="Barry K."/>
            <person name="Glavina del Rio T."/>
            <person name="Dalin E."/>
            <person name="Tice H."/>
            <person name="Pitluck S."/>
            <person name="Chertkov O."/>
            <person name="Brettin T."/>
            <person name="Bruce D."/>
            <person name="Detter J.C."/>
            <person name="Han C."/>
            <person name="Schmutz J."/>
            <person name="Larimer F."/>
            <person name="Land M."/>
            <person name="Hauser L."/>
            <person name="Kyrpides N."/>
            <person name="Kim E."/>
            <person name="Zhao J.-S."/>
            <person name="Richardson P."/>
        </authorList>
    </citation>
    <scope>NUCLEOTIDE SEQUENCE [LARGE SCALE GENOMIC DNA]</scope>
    <source>
        <strain>HAW-EB3</strain>
    </source>
</reference>
<organism>
    <name type="scientific">Shewanella sediminis (strain HAW-EB3)</name>
    <dbReference type="NCBI Taxonomy" id="425104"/>
    <lineage>
        <taxon>Bacteria</taxon>
        <taxon>Pseudomonadati</taxon>
        <taxon>Pseudomonadota</taxon>
        <taxon>Gammaproteobacteria</taxon>
        <taxon>Alteromonadales</taxon>
        <taxon>Shewanellaceae</taxon>
        <taxon>Shewanella</taxon>
    </lineage>
</organism>
<comment type="function">
    <text evidence="1">The enzymes which catalyze the reversible phosphorolysis of pyrimidine nucleosides are involved in the degradation of these compounds and in their utilization as carbon and energy sources, or in the rescue of pyrimidine bases for nucleotide synthesis.</text>
</comment>
<comment type="catalytic activity">
    <reaction evidence="1">
        <text>thymidine + phosphate = 2-deoxy-alpha-D-ribose 1-phosphate + thymine</text>
        <dbReference type="Rhea" id="RHEA:16037"/>
        <dbReference type="ChEBI" id="CHEBI:17748"/>
        <dbReference type="ChEBI" id="CHEBI:17821"/>
        <dbReference type="ChEBI" id="CHEBI:43474"/>
        <dbReference type="ChEBI" id="CHEBI:57259"/>
        <dbReference type="EC" id="2.4.2.4"/>
    </reaction>
</comment>
<comment type="pathway">
    <text evidence="1">Pyrimidine metabolism; dTMP biosynthesis via salvage pathway; dTMP from thymine: step 1/2.</text>
</comment>
<comment type="subunit">
    <text evidence="1">Homodimer.</text>
</comment>
<comment type="similarity">
    <text evidence="1">Belongs to the thymidine/pyrimidine-nucleoside phosphorylase family.</text>
</comment>
<accession>A8FYQ8</accession>
<feature type="chain" id="PRO_1000088112" description="Thymidine phosphorylase">
    <location>
        <begin position="1"/>
        <end position="443"/>
    </location>
</feature>
<dbReference type="EC" id="2.4.2.4" evidence="1"/>
<dbReference type="EMBL" id="CP000821">
    <property type="protein sequence ID" value="ABV37981.1"/>
    <property type="molecule type" value="Genomic_DNA"/>
</dbReference>
<dbReference type="RefSeq" id="WP_012143711.1">
    <property type="nucleotide sequence ID" value="NC_009831.1"/>
</dbReference>
<dbReference type="SMR" id="A8FYQ8"/>
<dbReference type="STRING" id="425104.Ssed_3377"/>
<dbReference type="KEGG" id="sse:Ssed_3377"/>
<dbReference type="eggNOG" id="COG0213">
    <property type="taxonomic scope" value="Bacteria"/>
</dbReference>
<dbReference type="HOGENOM" id="CLU_025040_0_1_6"/>
<dbReference type="OrthoDB" id="9763887at2"/>
<dbReference type="UniPathway" id="UPA00578">
    <property type="reaction ID" value="UER00638"/>
</dbReference>
<dbReference type="Proteomes" id="UP000002015">
    <property type="component" value="Chromosome"/>
</dbReference>
<dbReference type="GO" id="GO:0005829">
    <property type="term" value="C:cytosol"/>
    <property type="evidence" value="ECO:0007669"/>
    <property type="project" value="TreeGrafter"/>
</dbReference>
<dbReference type="GO" id="GO:0004645">
    <property type="term" value="F:1,4-alpha-oligoglucan phosphorylase activity"/>
    <property type="evidence" value="ECO:0007669"/>
    <property type="project" value="InterPro"/>
</dbReference>
<dbReference type="GO" id="GO:0009032">
    <property type="term" value="F:thymidine phosphorylase activity"/>
    <property type="evidence" value="ECO:0007669"/>
    <property type="project" value="UniProtKB-UniRule"/>
</dbReference>
<dbReference type="GO" id="GO:0006206">
    <property type="term" value="P:pyrimidine nucleobase metabolic process"/>
    <property type="evidence" value="ECO:0007669"/>
    <property type="project" value="InterPro"/>
</dbReference>
<dbReference type="GO" id="GO:0046104">
    <property type="term" value="P:thymidine metabolic process"/>
    <property type="evidence" value="ECO:0007669"/>
    <property type="project" value="UniProtKB-UniRule"/>
</dbReference>
<dbReference type="FunFam" id="3.40.1030.10:FF:000001">
    <property type="entry name" value="Thymidine phosphorylase"/>
    <property type="match status" value="1"/>
</dbReference>
<dbReference type="FunFam" id="3.90.1170.30:FF:000001">
    <property type="entry name" value="Thymidine phosphorylase"/>
    <property type="match status" value="1"/>
</dbReference>
<dbReference type="Gene3D" id="3.40.1030.10">
    <property type="entry name" value="Nucleoside phosphorylase/phosphoribosyltransferase catalytic domain"/>
    <property type="match status" value="1"/>
</dbReference>
<dbReference type="Gene3D" id="3.90.1170.30">
    <property type="entry name" value="Pyrimidine nucleoside phosphorylase-like, C-terminal domain"/>
    <property type="match status" value="1"/>
</dbReference>
<dbReference type="Gene3D" id="1.20.970.10">
    <property type="entry name" value="Transferase, Pyrimidine Nucleoside Phosphorylase, Chain C"/>
    <property type="match status" value="1"/>
</dbReference>
<dbReference type="HAMAP" id="MF_01628">
    <property type="entry name" value="Thymid_phosp"/>
    <property type="match status" value="1"/>
</dbReference>
<dbReference type="InterPro" id="IPR000312">
    <property type="entry name" value="Glycosyl_Trfase_fam3"/>
</dbReference>
<dbReference type="InterPro" id="IPR017459">
    <property type="entry name" value="Glycosyl_Trfase_fam3_N_dom"/>
</dbReference>
<dbReference type="InterPro" id="IPR036320">
    <property type="entry name" value="Glycosyl_Trfase_fam3_N_dom_sf"/>
</dbReference>
<dbReference type="InterPro" id="IPR035902">
    <property type="entry name" value="Nuc_phospho_transferase"/>
</dbReference>
<dbReference type="InterPro" id="IPR036566">
    <property type="entry name" value="PYNP-like_C_sf"/>
</dbReference>
<dbReference type="InterPro" id="IPR013102">
    <property type="entry name" value="PYNP_C"/>
</dbReference>
<dbReference type="InterPro" id="IPR018090">
    <property type="entry name" value="Pyrmidine_PPas_bac/euk"/>
</dbReference>
<dbReference type="InterPro" id="IPR017872">
    <property type="entry name" value="Pyrmidine_PPase_CS"/>
</dbReference>
<dbReference type="InterPro" id="IPR000053">
    <property type="entry name" value="Thymidine/pyrmidine_PPase"/>
</dbReference>
<dbReference type="InterPro" id="IPR013465">
    <property type="entry name" value="Thymidine_Pase"/>
</dbReference>
<dbReference type="NCBIfam" id="NF004490">
    <property type="entry name" value="PRK05820.1"/>
    <property type="match status" value="1"/>
</dbReference>
<dbReference type="NCBIfam" id="TIGR02643">
    <property type="entry name" value="T_phosphoryl"/>
    <property type="match status" value="1"/>
</dbReference>
<dbReference type="NCBIfam" id="TIGR02644">
    <property type="entry name" value="Y_phosphoryl"/>
    <property type="match status" value="1"/>
</dbReference>
<dbReference type="PANTHER" id="PTHR10515">
    <property type="entry name" value="THYMIDINE PHOSPHORYLASE"/>
    <property type="match status" value="1"/>
</dbReference>
<dbReference type="PANTHER" id="PTHR10515:SF0">
    <property type="entry name" value="THYMIDINE PHOSPHORYLASE"/>
    <property type="match status" value="1"/>
</dbReference>
<dbReference type="Pfam" id="PF02885">
    <property type="entry name" value="Glycos_trans_3N"/>
    <property type="match status" value="1"/>
</dbReference>
<dbReference type="Pfam" id="PF00591">
    <property type="entry name" value="Glycos_transf_3"/>
    <property type="match status" value="1"/>
</dbReference>
<dbReference type="Pfam" id="PF07831">
    <property type="entry name" value="PYNP_C"/>
    <property type="match status" value="1"/>
</dbReference>
<dbReference type="PIRSF" id="PIRSF000478">
    <property type="entry name" value="TP_PyNP"/>
    <property type="match status" value="1"/>
</dbReference>
<dbReference type="SMART" id="SM00941">
    <property type="entry name" value="PYNP_C"/>
    <property type="match status" value="1"/>
</dbReference>
<dbReference type="SUPFAM" id="SSF52418">
    <property type="entry name" value="Nucleoside phosphorylase/phosphoribosyltransferase catalytic domain"/>
    <property type="match status" value="1"/>
</dbReference>
<dbReference type="SUPFAM" id="SSF47648">
    <property type="entry name" value="Nucleoside phosphorylase/phosphoribosyltransferase N-terminal domain"/>
    <property type="match status" value="1"/>
</dbReference>
<dbReference type="SUPFAM" id="SSF54680">
    <property type="entry name" value="Pyrimidine nucleoside phosphorylase C-terminal domain"/>
    <property type="match status" value="1"/>
</dbReference>
<dbReference type="PROSITE" id="PS00647">
    <property type="entry name" value="THYMID_PHOSPHORYLASE"/>
    <property type="match status" value="1"/>
</dbReference>
<keyword id="KW-0328">Glycosyltransferase</keyword>
<keyword id="KW-1185">Reference proteome</keyword>
<keyword id="KW-0808">Transferase</keyword>
<evidence type="ECO:0000255" key="1">
    <source>
        <dbReference type="HAMAP-Rule" id="MF_01628"/>
    </source>
</evidence>
<proteinExistence type="inferred from homology"/>
<name>TYPH_SHESH</name>
<sequence length="443" mass="47054">MFLAQEIIRKKRNAEALSKEEIQFFVKGITDNTVSEGQIAALGMAVYFNDMNMDERIALTTSMRDSGTVLNWKSLDLDGPIIDKHSTGGVGDVISLMLGPMAAACGGYVPMISGRGLGHTGGTLDKFDAIPGYQTEPDSALFRKVVKEAGVAIIGQTGDLVPADKRFYSIRDNTATVESISLITASILSKKLAAGLDALAMDVKVGSGAFMPTYEASEELARSITAVANGAGTKTTALLTDMNQVLASCAGNAVEVKEAVDFLTGAYRNPRLYEVTMGLCAEMLQLGGIASSEAEAREKLNRVLDNGKAAEIFGRMISGLGGPADFIENTGLYLPESKIIRPVYADQTGFASAMDTRELGLAVVTLGGGRRKPGDALDYSVGLTKVCALGDEISADKPIAFIHAQTENAFAEAEAAVKKAIHVGETKPEKTPEIYRYIRESDL</sequence>